<comment type="function">
    <text evidence="2 3">Haemagglutinin that facilitates the adhesion to and invasion of epithelial mammalian cells. Utilizes heparinated proteoglycan as a receptor to successfully invade host cells.</text>
</comment>
<comment type="subcellular location">
    <subcellularLocation>
        <location evidence="2 3">Cell outer membrane</location>
        <topology evidence="2 3">Multi-pass membrane protein</topology>
    </subcellularLocation>
</comment>
<comment type="induction">
    <text evidence="4">Induced by both low pH and low Mg(2+) via the PhoQ/PhoP two-component regulatory system. Responds to general intracellular signals that are present both in initial and in progressive stages of infection.</text>
</comment>
<comment type="domain">
    <text evidence="3">All four putative extracellular loops are crucial for invasion of mammalian cells.</text>
</comment>
<sequence length="239" mass="25708">MKNFFAVCIIPLVVAWSATASAKEGIYITGKAGTSVVNVYGINSTFSQDEIVNGHATLPDRTKGVFGGGVAIGYDFYDPFQLPVRLELDTTFRGETDAKGGQDIIAFGDPVHINVKNQVRMTTYMVNGYYDFHNSTAFTPYISAGVGLAHVKLSNNTIPVGFGINETLSASKNNFAWGAGIGAKYAVTDNIMIDASYKYINAGKVSISKNHYAGDEHTAYDADTKAASNDFMLGITYAF</sequence>
<keyword id="KW-0998">Cell outer membrane</keyword>
<keyword id="KW-0472">Membrane</keyword>
<keyword id="KW-1185">Reference proteome</keyword>
<keyword id="KW-0732">Signal</keyword>
<keyword id="KW-0812">Transmembrane</keyword>
<keyword id="KW-1134">Transmembrane beta strand</keyword>
<keyword id="KW-0843">Virulence</keyword>
<evidence type="ECO:0000255" key="1"/>
<evidence type="ECO:0000269" key="2">
    <source>
    </source>
</evidence>
<evidence type="ECO:0000269" key="3">
    <source>
    </source>
</evidence>
<evidence type="ECO:0000269" key="4">
    <source>
    </source>
</evidence>
<name>PAGN_SALTY</name>
<gene>
    <name type="primary">pagN</name>
    <name type="synonym">iviVI-A</name>
    <name type="ordered locus">STM0306</name>
</gene>
<feature type="signal peptide" evidence="1">
    <location>
        <begin position="1"/>
        <end position="22"/>
    </location>
</feature>
<feature type="chain" id="PRO_0000407308" description="Outer membrane protein PagN">
    <location>
        <begin position="23"/>
        <end position="239"/>
    </location>
</feature>
<feature type="topological domain" description="Periplasmic" evidence="1">
    <location>
        <begin position="23"/>
        <end position="26"/>
    </location>
</feature>
<feature type="transmembrane region" description="Beta stranded" evidence="1">
    <location>
        <begin position="27"/>
        <end position="36"/>
    </location>
</feature>
<feature type="topological domain" description="Extracellular" evidence="1">
    <location>
        <begin position="37"/>
        <end position="65"/>
    </location>
</feature>
<feature type="transmembrane region" description="Beta stranded" evidence="1">
    <location>
        <begin position="66"/>
        <end position="76"/>
    </location>
</feature>
<feature type="topological domain" description="Periplasmic" evidence="1">
    <location>
        <begin position="77"/>
        <end position="81"/>
    </location>
</feature>
<feature type="transmembrane region" description="Beta stranded" evidence="1">
    <location>
        <begin position="82"/>
        <end position="92"/>
    </location>
</feature>
<feature type="topological domain" description="Extracellular" evidence="1">
    <location>
        <begin position="93"/>
        <end position="120"/>
    </location>
</feature>
<feature type="transmembrane region" description="Beta stranded" evidence="1">
    <location>
        <begin position="121"/>
        <end position="132"/>
    </location>
</feature>
<feature type="topological domain" description="Periplasmic" evidence="1">
    <location>
        <begin position="133"/>
        <end position="137"/>
    </location>
</feature>
<feature type="transmembrane region" description="Beta stranded" evidence="1">
    <location>
        <begin position="138"/>
        <end position="148"/>
    </location>
</feature>
<feature type="topological domain" description="Extracellular" evidence="1">
    <location>
        <begin position="149"/>
        <end position="174"/>
    </location>
</feature>
<feature type="transmembrane region" description="Beta stranded" evidence="1">
    <location>
        <begin position="175"/>
        <end position="185"/>
    </location>
</feature>
<feature type="topological domain" description="Periplasmic" evidence="1">
    <location>
        <begin position="186"/>
        <end position="190"/>
    </location>
</feature>
<feature type="transmembrane region" description="Beta stranded" evidence="1">
    <location>
        <begin position="191"/>
        <end position="200"/>
    </location>
</feature>
<feature type="topological domain" description="Extracellular" evidence="1">
    <location>
        <begin position="201"/>
        <end position="230"/>
    </location>
</feature>
<feature type="transmembrane region" description="Beta stranded" evidence="1">
    <location>
        <begin position="231"/>
        <end position="239"/>
    </location>
</feature>
<organism>
    <name type="scientific">Salmonella typhimurium (strain LT2 / SGSC1412 / ATCC 700720)</name>
    <dbReference type="NCBI Taxonomy" id="99287"/>
    <lineage>
        <taxon>Bacteria</taxon>
        <taxon>Pseudomonadati</taxon>
        <taxon>Pseudomonadota</taxon>
        <taxon>Gammaproteobacteria</taxon>
        <taxon>Enterobacterales</taxon>
        <taxon>Enterobacteriaceae</taxon>
        <taxon>Salmonella</taxon>
    </lineage>
</organism>
<reference key="1">
    <citation type="journal article" date="2001" name="Nature">
        <title>Complete genome sequence of Salmonella enterica serovar Typhimurium LT2.</title>
        <authorList>
            <person name="McClelland M."/>
            <person name="Sanderson K.E."/>
            <person name="Spieth J."/>
            <person name="Clifton S.W."/>
            <person name="Latreille P."/>
            <person name="Courtney L."/>
            <person name="Porwollik S."/>
            <person name="Ali J."/>
            <person name="Dante M."/>
            <person name="Du F."/>
            <person name="Hou S."/>
            <person name="Layman D."/>
            <person name="Leonard S."/>
            <person name="Nguyen C."/>
            <person name="Scott K."/>
            <person name="Holmes A."/>
            <person name="Grewal N."/>
            <person name="Mulvaney E."/>
            <person name="Ryan E."/>
            <person name="Sun H."/>
            <person name="Florea L."/>
            <person name="Miller W."/>
            <person name="Stoneking T."/>
            <person name="Nhan M."/>
            <person name="Waterston R."/>
            <person name="Wilson R.K."/>
        </authorList>
    </citation>
    <scope>NUCLEOTIDE SEQUENCE [LARGE SCALE GENOMIC DNA]</scope>
    <source>
        <strain>LT2 / SGSC1412 / ATCC 700720</strain>
    </source>
</reference>
<reference key="2">
    <citation type="journal article" date="1999" name="J. Bacteriol.">
        <title>Coordinate intracellular expression of Salmonella genes induced during infection.</title>
        <authorList>
            <person name="Heithoff D.M."/>
            <person name="Conner C.P."/>
            <person name="Hentschel U."/>
            <person name="Govantes F."/>
            <person name="Hanna P.C."/>
            <person name="Mahan M.J."/>
        </authorList>
    </citation>
    <scope>INDUCTION</scope>
    <source>
        <strain>ATCC 14028 / SGSC 2980 / CDC 6516-60 / NCTC 12023</strain>
    </source>
</reference>
<reference key="3">
    <citation type="journal article" date="2008" name="BMC Microbiol.">
        <title>The PagN protein of Salmonella enterica serovar Typhimurium is an adhesin and invasin.</title>
        <authorList>
            <person name="Lambert M.A."/>
            <person name="Smith S.G."/>
        </authorList>
    </citation>
    <scope>FUNCTION IN VIRULENCE</scope>
    <scope>SUBCELLULAR LOCATION</scope>
    <source>
        <strain>LT2</strain>
    </source>
</reference>
<reference key="4">
    <citation type="journal article" date="2009" name="FEMS Microbiol. Lett.">
        <title>The PagN protein mediates invasion via interaction with proteoglycan.</title>
        <authorList>
            <person name="Lambert M.A."/>
            <person name="Smith S.G."/>
        </authorList>
    </citation>
    <scope>FUNCTION</scope>
    <scope>SUBCELLULAR LOCATION</scope>
    <scope>TOPOLOGY</scope>
    <scope>DOMAIN</scope>
    <source>
        <strain>LT2</strain>
    </source>
</reference>
<protein>
    <recommendedName>
        <fullName>Outer membrane protein PagN</fullName>
    </recommendedName>
    <alternativeName>
        <fullName>Adhesin/invasin protein PagN</fullName>
    </alternativeName>
</protein>
<dbReference type="EMBL" id="AE006468">
    <property type="protein sequence ID" value="AAL19263.1"/>
    <property type="molecule type" value="Genomic_DNA"/>
</dbReference>
<dbReference type="RefSeq" id="NP_459304.1">
    <property type="nucleotide sequence ID" value="NC_003197.2"/>
</dbReference>
<dbReference type="RefSeq" id="WP_000787603.1">
    <property type="nucleotide sequence ID" value="NC_003197.2"/>
</dbReference>
<dbReference type="STRING" id="99287.STM0306"/>
<dbReference type="PaxDb" id="99287-STM0306"/>
<dbReference type="GeneID" id="1251825"/>
<dbReference type="KEGG" id="stm:STM0306"/>
<dbReference type="PATRIC" id="fig|99287.12.peg.325"/>
<dbReference type="HOGENOM" id="CLU_057473_1_0_6"/>
<dbReference type="OMA" id="YGAVRIN"/>
<dbReference type="PhylomeDB" id="Q8ZRJ9"/>
<dbReference type="BioCyc" id="SENT99287:STM0306-MONOMER"/>
<dbReference type="Proteomes" id="UP000001014">
    <property type="component" value="Chromosome"/>
</dbReference>
<dbReference type="GO" id="GO:0009279">
    <property type="term" value="C:cell outer membrane"/>
    <property type="evidence" value="ECO:0000318"/>
    <property type="project" value="GO_Central"/>
</dbReference>
<dbReference type="Gene3D" id="2.40.160.20">
    <property type="match status" value="1"/>
</dbReference>
<dbReference type="InterPro" id="IPR051723">
    <property type="entry name" value="Bact_OM_Invasion-Related"/>
</dbReference>
<dbReference type="InterPro" id="IPR011250">
    <property type="entry name" value="OMP/PagP_b-brl"/>
</dbReference>
<dbReference type="InterPro" id="IPR027385">
    <property type="entry name" value="OMP_b-brl"/>
</dbReference>
<dbReference type="PANTHER" id="PTHR35892:SF2">
    <property type="entry name" value="OUTER MEMBRANE PROTEIN PAGN"/>
    <property type="match status" value="1"/>
</dbReference>
<dbReference type="PANTHER" id="PTHR35892">
    <property type="entry name" value="OUTER MEMBRANE PROTEIN PAGN-RELATED"/>
    <property type="match status" value="1"/>
</dbReference>
<dbReference type="Pfam" id="PF13505">
    <property type="entry name" value="OMP_b-brl"/>
    <property type="match status" value="1"/>
</dbReference>
<dbReference type="SUPFAM" id="SSF56925">
    <property type="entry name" value="OMPA-like"/>
    <property type="match status" value="1"/>
</dbReference>
<accession>Q8ZRJ9</accession>
<proteinExistence type="evidence at protein level"/>